<protein>
    <recommendedName>
        <fullName evidence="7">Monoacylglycerol lipase ABHD2</fullName>
        <ecNumber evidence="1">3.1.1.23</ecNumber>
    </recommendedName>
    <alternativeName>
        <fullName evidence="7">2-arachidonoylglycerol hydrolase</fullName>
    </alternativeName>
    <alternativeName>
        <fullName evidence="7">Abhydrolase domain-containing protein 2</fullName>
    </alternativeName>
    <alternativeName>
        <fullName evidence="1">Acetylesterase</fullName>
        <ecNumber evidence="1">3.1.1.6</ecNumber>
    </alternativeName>
    <alternativeName>
        <fullName evidence="1">Triacylglycerol lipase</fullName>
        <ecNumber evidence="1">3.1.1.79</ecNumber>
    </alternativeName>
</protein>
<proteinExistence type="evidence at transcript level"/>
<organism>
    <name type="scientific">Macaca fascicularis</name>
    <name type="common">Crab-eating macaque</name>
    <name type="synonym">Cynomolgus monkey</name>
    <dbReference type="NCBI Taxonomy" id="9541"/>
    <lineage>
        <taxon>Eukaryota</taxon>
        <taxon>Metazoa</taxon>
        <taxon>Chordata</taxon>
        <taxon>Craniata</taxon>
        <taxon>Vertebrata</taxon>
        <taxon>Euteleostomi</taxon>
        <taxon>Mammalia</taxon>
        <taxon>Eutheria</taxon>
        <taxon>Euarchontoglires</taxon>
        <taxon>Primates</taxon>
        <taxon>Haplorrhini</taxon>
        <taxon>Catarrhini</taxon>
        <taxon>Cercopithecidae</taxon>
        <taxon>Cercopithecinae</taxon>
        <taxon>Macaca</taxon>
    </lineage>
</organism>
<gene>
    <name type="primary">ABHD2</name>
    <name type="ORF">QtsA-14549</name>
    <name type="ORF">QtsA-21018</name>
</gene>
<sequence>MNAMLETPELPAVFDGVKLAAVAAVLYVIVRCLNLKSPTAPPDLYFQDSGLSRFLLKSCPLLTKEYIPPLIWGKSGHIQTALYGKMGRVRSPHPYGHRKFITMSDGATSTFDLFEPLAEHCVGDDITMVICPGIANHSEKQYIRTFVDYAQKNGYRCAVLNHLGALPNIELTSPRMFTYGCTWEFGAMVNYIKKTYPLTQLVVVGFSLGGNIVCKYLGETQANQEKVLCCVSVCQGYSALRAQETFMQWDQCRRFYNFLMADNMKKIILSHRQALFGDHVKKPQSLEDTDLSRLYTATSLMQIDDNVMRKFHGYNSLKEYYEEESCMRYLHRIYVPLMLVNAADDPLVHESLLTIPKSLSEKRENVMFVLPLHGGHLGFFEGSVLFPEPLTWMDKLVVEYANAICQWERNKSQCSDTEQVEADLE</sequence>
<comment type="function">
    <text evidence="1 3">Progesterone-dependent acylglycerol lipase that catalyzes hydrolysis of endocannabinoid arachidonoylglycerol (AG) from cell membrane. Acts as a progesterone receptor: progesterone-binding activates the acylglycerol lipase activity, mediating degradation of 1-arachidonoylglycerol (1AG) and 2-arachidonoylglycerol (2AG) to glycerol and arachidonic acid (AA). Also displays an ester hydrolase activity against acetyl ester, butanoate ester and hexadecanoate ester. Plays a key role in sperm capacitation in response to progesterone by mediating degradation of 2AG, an inhibitor of the sperm calcium channel CatSper, leading to calcium influx via CatSper and sperm activation (By similarity). May also play a role in smooth muscle cells migration (By similarity).</text>
</comment>
<comment type="catalytic activity">
    <reaction evidence="1">
        <text>Hydrolyzes glycerol monoesters of long-chain fatty acids.</text>
        <dbReference type="EC" id="3.1.1.23"/>
    </reaction>
</comment>
<comment type="catalytic activity">
    <reaction evidence="1">
        <text>an acetyl ester + H2O = an aliphatic alcohol + acetate + H(+)</text>
        <dbReference type="Rhea" id="RHEA:12957"/>
        <dbReference type="ChEBI" id="CHEBI:2571"/>
        <dbReference type="ChEBI" id="CHEBI:15377"/>
        <dbReference type="ChEBI" id="CHEBI:15378"/>
        <dbReference type="ChEBI" id="CHEBI:30089"/>
        <dbReference type="ChEBI" id="CHEBI:47622"/>
        <dbReference type="EC" id="3.1.1.6"/>
    </reaction>
    <physiologicalReaction direction="left-to-right" evidence="1">
        <dbReference type="Rhea" id="RHEA:12958"/>
    </physiologicalReaction>
</comment>
<comment type="catalytic activity">
    <reaction evidence="1">
        <text>a triacylglycerol + H2O = a diacylglycerol + a fatty acid + H(+)</text>
        <dbReference type="Rhea" id="RHEA:12044"/>
        <dbReference type="ChEBI" id="CHEBI:15377"/>
        <dbReference type="ChEBI" id="CHEBI:15378"/>
        <dbReference type="ChEBI" id="CHEBI:17855"/>
        <dbReference type="ChEBI" id="CHEBI:18035"/>
        <dbReference type="ChEBI" id="CHEBI:28868"/>
        <dbReference type="EC" id="3.1.1.79"/>
    </reaction>
    <physiologicalReaction direction="left-to-right" evidence="1">
        <dbReference type="Rhea" id="RHEA:12045"/>
    </physiologicalReaction>
</comment>
<comment type="catalytic activity">
    <reaction evidence="1">
        <text>2-(5Z,8Z,11Z,14Z-eicosatetraenoyl)-glycerol + H2O = glycerol + (5Z,8Z,11Z,14Z)-eicosatetraenoate + H(+)</text>
        <dbReference type="Rhea" id="RHEA:26132"/>
        <dbReference type="ChEBI" id="CHEBI:15377"/>
        <dbReference type="ChEBI" id="CHEBI:15378"/>
        <dbReference type="ChEBI" id="CHEBI:17754"/>
        <dbReference type="ChEBI" id="CHEBI:32395"/>
        <dbReference type="ChEBI" id="CHEBI:52392"/>
    </reaction>
    <physiologicalReaction direction="left-to-right" evidence="1">
        <dbReference type="Rhea" id="RHEA:26133"/>
    </physiologicalReaction>
</comment>
<comment type="catalytic activity">
    <reaction evidence="1">
        <text>a butanoate ester + H2O = an aliphatic alcohol + butanoate + H(+)</text>
        <dbReference type="Rhea" id="RHEA:47348"/>
        <dbReference type="ChEBI" id="CHEBI:2571"/>
        <dbReference type="ChEBI" id="CHEBI:15377"/>
        <dbReference type="ChEBI" id="CHEBI:15378"/>
        <dbReference type="ChEBI" id="CHEBI:17968"/>
        <dbReference type="ChEBI" id="CHEBI:50477"/>
    </reaction>
    <physiologicalReaction direction="left-to-right" evidence="1">
        <dbReference type="Rhea" id="RHEA:47349"/>
    </physiologicalReaction>
</comment>
<comment type="catalytic activity">
    <reaction evidence="1">
        <text>hexadecanoate ester + H2O = an aliphatic alcohol + hexadecanoate + H(+)</text>
        <dbReference type="Rhea" id="RHEA:47392"/>
        <dbReference type="ChEBI" id="CHEBI:2571"/>
        <dbReference type="ChEBI" id="CHEBI:7896"/>
        <dbReference type="ChEBI" id="CHEBI:15377"/>
        <dbReference type="ChEBI" id="CHEBI:15378"/>
        <dbReference type="ChEBI" id="CHEBI:25835"/>
    </reaction>
    <physiologicalReaction direction="left-to-right" evidence="1">
        <dbReference type="Rhea" id="RHEA:47393"/>
    </physiologicalReaction>
</comment>
<comment type="activity regulation">
    <text evidence="1">Acylglycerol lipase activity is activated upon binding to progesterone.</text>
</comment>
<comment type="subcellular location">
    <subcellularLocation>
        <location evidence="1">Cell membrane</location>
        <topology evidence="1">Single-pass type II membrane protein</topology>
    </subcellularLocation>
</comment>
<comment type="alternative products">
    <event type="alternative splicing"/>
    <isoform>
        <id>Q4R2Y9-1</id>
        <name>1</name>
        <sequence type="displayed"/>
    </isoform>
    <isoform>
        <id>Q4R2Y9-2</id>
        <name>2</name>
        <sequence type="described" ref="VSP_023917 VSP_023918"/>
    </isoform>
</comment>
<comment type="similarity">
    <text evidence="7">Belongs to the AB hydrolase superfamily. AB hydrolase 4 family.</text>
</comment>
<accession>Q4R2Y9</accession>
<accession>Q4R7R8</accession>
<keyword id="KW-0025">Alternative splicing</keyword>
<keyword id="KW-1003">Cell membrane</keyword>
<keyword id="KW-0325">Glycoprotein</keyword>
<keyword id="KW-0378">Hydrolase</keyword>
<keyword id="KW-0442">Lipid degradation</keyword>
<keyword id="KW-0443">Lipid metabolism</keyword>
<keyword id="KW-0472">Membrane</keyword>
<keyword id="KW-1185">Reference proteome</keyword>
<keyword id="KW-0719">Serine esterase</keyword>
<keyword id="KW-0735">Signal-anchor</keyword>
<keyword id="KW-0812">Transmembrane</keyword>
<keyword id="KW-1133">Transmembrane helix</keyword>
<feature type="chain" id="PRO_0000280781" description="Monoacylglycerol lipase ABHD2">
    <location>
        <begin position="1"/>
        <end position="425"/>
    </location>
</feature>
<feature type="topological domain" description="Cytoplasmic" evidence="7">
    <location>
        <begin position="1"/>
        <end position="9"/>
    </location>
</feature>
<feature type="transmembrane region" description="Helical; Signal-anchor for type II membrane protein" evidence="4">
    <location>
        <begin position="10"/>
        <end position="30"/>
    </location>
</feature>
<feature type="topological domain" description="Extracellular" evidence="7">
    <location>
        <begin position="31"/>
        <end position="425"/>
    </location>
</feature>
<feature type="domain" description="AB hydrolase-1" evidence="4">
    <location>
        <begin position="128"/>
        <end position="382"/>
    </location>
</feature>
<feature type="active site" description="Nucleophile" evidence="2">
    <location>
        <position position="207"/>
    </location>
</feature>
<feature type="active site" description="Charge relay system" evidence="2">
    <location>
        <position position="345"/>
    </location>
</feature>
<feature type="active site" description="Charge relay system" evidence="2">
    <location>
        <position position="376"/>
    </location>
</feature>
<feature type="glycosylation site" description="N-linked (GlcNAc...) asparagine" evidence="5">
    <location>
        <position position="136"/>
    </location>
</feature>
<feature type="glycosylation site" description="N-linked (GlcNAc...) asparagine" evidence="5">
    <location>
        <position position="410"/>
    </location>
</feature>
<feature type="splice variant" id="VSP_023917" description="In isoform 2." evidence="6">
    <original>KYLGET</original>
    <variation>ARGTVH</variation>
    <location>
        <begin position="215"/>
        <end position="220"/>
    </location>
</feature>
<feature type="splice variant" id="VSP_023918" description="In isoform 2." evidence="6">
    <location>
        <begin position="221"/>
        <end position="425"/>
    </location>
</feature>
<dbReference type="EC" id="3.1.1.23" evidence="1"/>
<dbReference type="EC" id="3.1.1.6" evidence="1"/>
<dbReference type="EC" id="3.1.1.79" evidence="1"/>
<dbReference type="EMBL" id="AB168745">
    <property type="protein sequence ID" value="BAE00854.1"/>
    <property type="molecule type" value="mRNA"/>
</dbReference>
<dbReference type="EMBL" id="AB179479">
    <property type="protein sequence ID" value="BAE02530.1"/>
    <property type="molecule type" value="mRNA"/>
</dbReference>
<dbReference type="RefSeq" id="NP_001270570.1">
    <property type="nucleotide sequence ID" value="NM_001283641.1"/>
</dbReference>
<dbReference type="RefSeq" id="XP_005560519.1">
    <molecule id="Q4R2Y9-1"/>
    <property type="nucleotide sequence ID" value="XM_005560462.4"/>
</dbReference>
<dbReference type="RefSeq" id="XP_015308713.1">
    <property type="nucleotide sequence ID" value="XM_015453227.1"/>
</dbReference>
<dbReference type="RefSeq" id="XP_045251902.1">
    <molecule id="Q4R2Y9-1"/>
    <property type="nucleotide sequence ID" value="XM_045395967.2"/>
</dbReference>
<dbReference type="RefSeq" id="XP_065404465.1">
    <molecule id="Q4R2Y9-1"/>
    <property type="nucleotide sequence ID" value="XM_065548393.1"/>
</dbReference>
<dbReference type="RefSeq" id="XP_065404466.1">
    <molecule id="Q4R2Y9-1"/>
    <property type="nucleotide sequence ID" value="XM_065548394.1"/>
</dbReference>
<dbReference type="STRING" id="9541.ENSMFAP00000000474"/>
<dbReference type="ESTHER" id="macfa-abhd2">
    <property type="family name" value="abh_upf0017"/>
</dbReference>
<dbReference type="GlyCosmos" id="Q4R2Y9">
    <property type="glycosylation" value="2 sites, No reported glycans"/>
</dbReference>
<dbReference type="Ensembl" id="ENSMFAT00000028633.2">
    <molecule id="Q4R2Y9-2"/>
    <property type="protein sequence ID" value="ENSMFAP00000000464.2"/>
    <property type="gene ID" value="ENSMFAG00000034068.2"/>
</dbReference>
<dbReference type="Ensembl" id="ENSMFAT00000087775.1">
    <molecule id="Q4R2Y9-1"/>
    <property type="protein sequence ID" value="ENSMFAP00000048606.1"/>
    <property type="gene ID" value="ENSMFAG00000034068.2"/>
</dbReference>
<dbReference type="GeneID" id="101867085"/>
<dbReference type="CTD" id="11057"/>
<dbReference type="VEuPathDB" id="HostDB:ENSMFAG00000034068"/>
<dbReference type="eggNOG" id="KOG1838">
    <property type="taxonomic scope" value="Eukaryota"/>
</dbReference>
<dbReference type="GeneTree" id="ENSGT00950000182902"/>
<dbReference type="OMA" id="HCTGEDV"/>
<dbReference type="Proteomes" id="UP000233100">
    <property type="component" value="Chromosome 7"/>
</dbReference>
<dbReference type="Bgee" id="ENSMFAG00000034068">
    <property type="expression patterns" value="Expressed in liver and 13 other cell types or tissues"/>
</dbReference>
<dbReference type="GO" id="GO:0001669">
    <property type="term" value="C:acrosomal vesicle"/>
    <property type="evidence" value="ECO:0007669"/>
    <property type="project" value="Ensembl"/>
</dbReference>
<dbReference type="GO" id="GO:0036126">
    <property type="term" value="C:sperm flagellum"/>
    <property type="evidence" value="ECO:0007669"/>
    <property type="project" value="Ensembl"/>
</dbReference>
<dbReference type="GO" id="GO:0097524">
    <property type="term" value="C:sperm plasma membrane"/>
    <property type="evidence" value="ECO:0007669"/>
    <property type="project" value="Ensembl"/>
</dbReference>
<dbReference type="GO" id="GO:0008126">
    <property type="term" value="F:acetylesterase activity"/>
    <property type="evidence" value="ECO:0000250"/>
    <property type="project" value="UniProtKB"/>
</dbReference>
<dbReference type="GO" id="GO:0120516">
    <property type="term" value="F:diacylglycerol lipase activity"/>
    <property type="evidence" value="ECO:0000250"/>
    <property type="project" value="UniProtKB"/>
</dbReference>
<dbReference type="GO" id="GO:0042562">
    <property type="term" value="F:hormone binding"/>
    <property type="evidence" value="ECO:0000250"/>
    <property type="project" value="UniProtKB"/>
</dbReference>
<dbReference type="GO" id="GO:0047372">
    <property type="term" value="F:monoacylglycerol lipase activity"/>
    <property type="evidence" value="ECO:0000250"/>
    <property type="project" value="UniProtKB"/>
</dbReference>
<dbReference type="GO" id="GO:0003707">
    <property type="term" value="F:nuclear steroid receptor activity"/>
    <property type="evidence" value="ECO:0000250"/>
    <property type="project" value="UniProtKB"/>
</dbReference>
<dbReference type="GO" id="GO:0004806">
    <property type="term" value="F:triacylglycerol lipase activity"/>
    <property type="evidence" value="ECO:0007669"/>
    <property type="project" value="RHEA"/>
</dbReference>
<dbReference type="GO" id="GO:0007340">
    <property type="term" value="P:acrosome reaction"/>
    <property type="evidence" value="ECO:0007669"/>
    <property type="project" value="Ensembl"/>
</dbReference>
<dbReference type="GO" id="GO:0046464">
    <property type="term" value="P:acylglycerol catabolic process"/>
    <property type="evidence" value="ECO:0000250"/>
    <property type="project" value="UniProtKB"/>
</dbReference>
<dbReference type="GO" id="GO:0051792">
    <property type="term" value="P:medium-chain fatty acid biosynthetic process"/>
    <property type="evidence" value="ECO:0007669"/>
    <property type="project" value="TreeGrafter"/>
</dbReference>
<dbReference type="GO" id="GO:0051793">
    <property type="term" value="P:medium-chain fatty acid catabolic process"/>
    <property type="evidence" value="ECO:0007669"/>
    <property type="project" value="TreeGrafter"/>
</dbReference>
<dbReference type="GO" id="GO:0014912">
    <property type="term" value="P:negative regulation of smooth muscle cell migration"/>
    <property type="evidence" value="ECO:0007669"/>
    <property type="project" value="Ensembl"/>
</dbReference>
<dbReference type="GO" id="GO:0032570">
    <property type="term" value="P:response to progesterone"/>
    <property type="evidence" value="ECO:0000250"/>
    <property type="project" value="UniProtKB"/>
</dbReference>
<dbReference type="GO" id="GO:0009611">
    <property type="term" value="P:response to wounding"/>
    <property type="evidence" value="ECO:0007669"/>
    <property type="project" value="Ensembl"/>
</dbReference>
<dbReference type="GO" id="GO:0014909">
    <property type="term" value="P:smooth muscle cell migration"/>
    <property type="evidence" value="ECO:0007669"/>
    <property type="project" value="Ensembl"/>
</dbReference>
<dbReference type="GO" id="GO:0048240">
    <property type="term" value="P:sperm capacitation"/>
    <property type="evidence" value="ECO:0007669"/>
    <property type="project" value="Ensembl"/>
</dbReference>
<dbReference type="GO" id="GO:0043401">
    <property type="term" value="P:steroid hormone receptor signaling pathway"/>
    <property type="evidence" value="ECO:0000250"/>
    <property type="project" value="UniProtKB"/>
</dbReference>
<dbReference type="FunFam" id="3.40.50.1820:FF:000053">
    <property type="entry name" value="Abhydrolase domain containing 2"/>
    <property type="match status" value="1"/>
</dbReference>
<dbReference type="Gene3D" id="3.40.50.1820">
    <property type="entry name" value="alpha/beta hydrolase"/>
    <property type="match status" value="1"/>
</dbReference>
<dbReference type="InterPro" id="IPR000073">
    <property type="entry name" value="AB_hydrolase_1"/>
</dbReference>
<dbReference type="InterPro" id="IPR000952">
    <property type="entry name" value="AB_hydrolase_4_CS"/>
</dbReference>
<dbReference type="InterPro" id="IPR050960">
    <property type="entry name" value="AB_hydrolase_4_sf"/>
</dbReference>
<dbReference type="InterPro" id="IPR029058">
    <property type="entry name" value="AB_hydrolase_fold"/>
</dbReference>
<dbReference type="InterPro" id="IPR012020">
    <property type="entry name" value="ABHD4"/>
</dbReference>
<dbReference type="PANTHER" id="PTHR10794">
    <property type="entry name" value="ABHYDROLASE DOMAIN-CONTAINING PROTEIN"/>
    <property type="match status" value="1"/>
</dbReference>
<dbReference type="PANTHER" id="PTHR10794:SF45">
    <property type="entry name" value="MONOACYLGLYCEROL LIPASE ABHD2"/>
    <property type="match status" value="1"/>
</dbReference>
<dbReference type="Pfam" id="PF00561">
    <property type="entry name" value="Abhydrolase_1"/>
    <property type="match status" value="1"/>
</dbReference>
<dbReference type="PIRSF" id="PIRSF005211">
    <property type="entry name" value="Ab_hydro_YheT"/>
    <property type="match status" value="1"/>
</dbReference>
<dbReference type="SUPFAM" id="SSF53474">
    <property type="entry name" value="alpha/beta-Hydrolases"/>
    <property type="match status" value="1"/>
</dbReference>
<dbReference type="PROSITE" id="PS01133">
    <property type="entry name" value="UPF0017"/>
    <property type="match status" value="1"/>
</dbReference>
<reference key="1">
    <citation type="submission" date="2005-06" db="EMBL/GenBank/DDBJ databases">
        <title>DNA sequences of macaque genes expressed in brain or testis and its evolutionary implications.</title>
        <authorList>
            <consortium name="International consortium for macaque cDNA sequencing and analysis"/>
        </authorList>
    </citation>
    <scope>NUCLEOTIDE SEQUENCE [LARGE SCALE MRNA] (ISOFORMS 1 AND 2)</scope>
    <source>
        <tissue>Testis</tissue>
    </source>
</reference>
<name>ABHD2_MACFA</name>
<evidence type="ECO:0000250" key="1">
    <source>
        <dbReference type="UniProtKB" id="P08910"/>
    </source>
</evidence>
<evidence type="ECO:0000250" key="2">
    <source>
        <dbReference type="UniProtKB" id="Q86WA6"/>
    </source>
</evidence>
<evidence type="ECO:0000250" key="3">
    <source>
        <dbReference type="UniProtKB" id="Q9QXM0"/>
    </source>
</evidence>
<evidence type="ECO:0000255" key="4"/>
<evidence type="ECO:0000255" key="5">
    <source>
        <dbReference type="PROSITE-ProRule" id="PRU00498"/>
    </source>
</evidence>
<evidence type="ECO:0000303" key="6">
    <source ref="1"/>
</evidence>
<evidence type="ECO:0000305" key="7"/>